<proteinExistence type="inferred from homology"/>
<gene>
    <name evidence="1" type="primary">pnp</name>
    <name type="ordered locus">Lferr_0559</name>
</gene>
<feature type="chain" id="PRO_1000147876" description="Polyribonucleotide nucleotidyltransferase">
    <location>
        <begin position="1"/>
        <end position="692"/>
    </location>
</feature>
<feature type="domain" description="KH" evidence="1">
    <location>
        <begin position="551"/>
        <end position="610"/>
    </location>
</feature>
<feature type="domain" description="S1 motif" evidence="1">
    <location>
        <begin position="620"/>
        <end position="688"/>
    </location>
</feature>
<feature type="binding site" evidence="1">
    <location>
        <position position="484"/>
    </location>
    <ligand>
        <name>Mg(2+)</name>
        <dbReference type="ChEBI" id="CHEBI:18420"/>
    </ligand>
</feature>
<feature type="binding site" evidence="1">
    <location>
        <position position="490"/>
    </location>
    <ligand>
        <name>Mg(2+)</name>
        <dbReference type="ChEBI" id="CHEBI:18420"/>
    </ligand>
</feature>
<organism>
    <name type="scientific">Acidithiobacillus ferrooxidans (strain ATCC 53993 / BNL-5-31)</name>
    <name type="common">Leptospirillum ferrooxidans (ATCC 53993)</name>
    <dbReference type="NCBI Taxonomy" id="380394"/>
    <lineage>
        <taxon>Bacteria</taxon>
        <taxon>Pseudomonadati</taxon>
        <taxon>Pseudomonadota</taxon>
        <taxon>Acidithiobacillia</taxon>
        <taxon>Acidithiobacillales</taxon>
        <taxon>Acidithiobacillaceae</taxon>
        <taxon>Acidithiobacillus</taxon>
    </lineage>
</organism>
<keyword id="KW-0963">Cytoplasm</keyword>
<keyword id="KW-0460">Magnesium</keyword>
<keyword id="KW-0479">Metal-binding</keyword>
<keyword id="KW-0548">Nucleotidyltransferase</keyword>
<keyword id="KW-0694">RNA-binding</keyword>
<keyword id="KW-0808">Transferase</keyword>
<name>PNP_ACIF5</name>
<evidence type="ECO:0000255" key="1">
    <source>
        <dbReference type="HAMAP-Rule" id="MF_01595"/>
    </source>
</evidence>
<sequence>MTMIRKEVDFGGRRLQLETGRMARQADGAVLVSSGDTVVLVTAVGRREMKPGQDFFPLTVNYQEKAYAAGKIPGGFFKREGRPTEKETLTSRLIDRPIRPLFPKGFMNEVQVIATVVSVDRDNDPDILALVGASAALAVSGIPFNGPIGAARVAYIDGKYVLNPSYAQLTTSQLDLVVAGTRQAVLMVESEAQQLSEEIMLEAVMFGHAQFQPVIETIEALAREAGKPRWEWVAPVADEALGVQVREKATPLLQEAYALTEKQARSKRLEDVQQAMAVEFGSDDAGRGDMVRGLLKKIETGIVRGRILDGAPRIDGRDSKTVRPITIEAGVLPRTHGSALFTRGETQALVVATLGTKGDEQIIDALQGESRDRFMLHYNFPPFSTGETGMVGSPKRREIGHGRLAKRAIAAVLPTDSEFPYSLRVVSEVLESNGSSSMATVCGASLALMDAGVPLKAPVAGVAMGLIKEGARFAVLTDILGDEDHLGDMDFKVAGTEQGVTALQMDIKIDGITREIMAQALQQALAGRLHILGLMNGVLSRGRGELSDYAPRIITIQINPDRIRDVIGPGGKVIRALTEETGATIDIQDNGTVTIASVDGEAGAAAKRRIELLTADVQVDTIYDGKVAKIMDFGAFVTILPGRDGLLHISQISNERVSDVHDHLKEGQAVRVKVLEVDRQGKIKLSMKDIPQ</sequence>
<accession>B5EMD4</accession>
<reference key="1">
    <citation type="submission" date="2008-08" db="EMBL/GenBank/DDBJ databases">
        <title>Complete sequence of Acidithiobacillus ferrooxidans ATCC 53993.</title>
        <authorList>
            <person name="Lucas S."/>
            <person name="Copeland A."/>
            <person name="Lapidus A."/>
            <person name="Glavina del Rio T."/>
            <person name="Dalin E."/>
            <person name="Tice H."/>
            <person name="Bruce D."/>
            <person name="Goodwin L."/>
            <person name="Pitluck S."/>
            <person name="Sims D."/>
            <person name="Brettin T."/>
            <person name="Detter J.C."/>
            <person name="Han C."/>
            <person name="Kuske C.R."/>
            <person name="Larimer F."/>
            <person name="Land M."/>
            <person name="Hauser L."/>
            <person name="Kyrpides N."/>
            <person name="Lykidis A."/>
            <person name="Borole A.P."/>
        </authorList>
    </citation>
    <scope>NUCLEOTIDE SEQUENCE [LARGE SCALE GENOMIC DNA]</scope>
    <source>
        <strain>ATCC 53993 / BNL-5-31</strain>
    </source>
</reference>
<dbReference type="EC" id="2.7.7.8" evidence="1"/>
<dbReference type="EMBL" id="CP001132">
    <property type="protein sequence ID" value="ACH82813.1"/>
    <property type="molecule type" value="Genomic_DNA"/>
</dbReference>
<dbReference type="RefSeq" id="WP_009567342.1">
    <property type="nucleotide sequence ID" value="NC_011206.1"/>
</dbReference>
<dbReference type="SMR" id="B5EMD4"/>
<dbReference type="KEGG" id="afe:Lferr_0559"/>
<dbReference type="eggNOG" id="COG1185">
    <property type="taxonomic scope" value="Bacteria"/>
</dbReference>
<dbReference type="HOGENOM" id="CLU_004217_2_2_6"/>
<dbReference type="GO" id="GO:0005829">
    <property type="term" value="C:cytosol"/>
    <property type="evidence" value="ECO:0007669"/>
    <property type="project" value="TreeGrafter"/>
</dbReference>
<dbReference type="GO" id="GO:0000175">
    <property type="term" value="F:3'-5'-RNA exonuclease activity"/>
    <property type="evidence" value="ECO:0007669"/>
    <property type="project" value="TreeGrafter"/>
</dbReference>
<dbReference type="GO" id="GO:0000287">
    <property type="term" value="F:magnesium ion binding"/>
    <property type="evidence" value="ECO:0007669"/>
    <property type="project" value="UniProtKB-UniRule"/>
</dbReference>
<dbReference type="GO" id="GO:0004654">
    <property type="term" value="F:polyribonucleotide nucleotidyltransferase activity"/>
    <property type="evidence" value="ECO:0007669"/>
    <property type="project" value="UniProtKB-UniRule"/>
</dbReference>
<dbReference type="GO" id="GO:0003723">
    <property type="term" value="F:RNA binding"/>
    <property type="evidence" value="ECO:0007669"/>
    <property type="project" value="UniProtKB-UniRule"/>
</dbReference>
<dbReference type="GO" id="GO:0006402">
    <property type="term" value="P:mRNA catabolic process"/>
    <property type="evidence" value="ECO:0007669"/>
    <property type="project" value="UniProtKB-UniRule"/>
</dbReference>
<dbReference type="GO" id="GO:0006396">
    <property type="term" value="P:RNA processing"/>
    <property type="evidence" value="ECO:0007669"/>
    <property type="project" value="InterPro"/>
</dbReference>
<dbReference type="CDD" id="cd02393">
    <property type="entry name" value="KH-I_PNPase"/>
    <property type="match status" value="1"/>
</dbReference>
<dbReference type="CDD" id="cd11363">
    <property type="entry name" value="RNase_PH_PNPase_1"/>
    <property type="match status" value="1"/>
</dbReference>
<dbReference type="CDD" id="cd11364">
    <property type="entry name" value="RNase_PH_PNPase_2"/>
    <property type="match status" value="1"/>
</dbReference>
<dbReference type="CDD" id="cd04472">
    <property type="entry name" value="S1_PNPase"/>
    <property type="match status" value="1"/>
</dbReference>
<dbReference type="FunFam" id="2.40.50.140:FF:000023">
    <property type="entry name" value="Polyribonucleotide nucleotidyltransferase"/>
    <property type="match status" value="1"/>
</dbReference>
<dbReference type="FunFam" id="3.30.1370.10:FF:000001">
    <property type="entry name" value="Polyribonucleotide nucleotidyltransferase"/>
    <property type="match status" value="1"/>
</dbReference>
<dbReference type="FunFam" id="3.30.230.70:FF:000001">
    <property type="entry name" value="Polyribonucleotide nucleotidyltransferase"/>
    <property type="match status" value="1"/>
</dbReference>
<dbReference type="FunFam" id="3.30.230.70:FF:000002">
    <property type="entry name" value="Polyribonucleotide nucleotidyltransferase"/>
    <property type="match status" value="1"/>
</dbReference>
<dbReference type="Gene3D" id="3.30.230.70">
    <property type="entry name" value="GHMP Kinase, N-terminal domain"/>
    <property type="match status" value="2"/>
</dbReference>
<dbReference type="Gene3D" id="3.30.1370.10">
    <property type="entry name" value="K Homology domain, type 1"/>
    <property type="match status" value="1"/>
</dbReference>
<dbReference type="Gene3D" id="2.40.50.140">
    <property type="entry name" value="Nucleic acid-binding proteins"/>
    <property type="match status" value="1"/>
</dbReference>
<dbReference type="HAMAP" id="MF_01595">
    <property type="entry name" value="PNPase"/>
    <property type="match status" value="1"/>
</dbReference>
<dbReference type="InterPro" id="IPR001247">
    <property type="entry name" value="ExoRNase_PH_dom1"/>
</dbReference>
<dbReference type="InterPro" id="IPR015847">
    <property type="entry name" value="ExoRNase_PH_dom2"/>
</dbReference>
<dbReference type="InterPro" id="IPR036345">
    <property type="entry name" value="ExoRNase_PH_dom2_sf"/>
</dbReference>
<dbReference type="InterPro" id="IPR004087">
    <property type="entry name" value="KH_dom"/>
</dbReference>
<dbReference type="InterPro" id="IPR004088">
    <property type="entry name" value="KH_dom_type_1"/>
</dbReference>
<dbReference type="InterPro" id="IPR036612">
    <property type="entry name" value="KH_dom_type_1_sf"/>
</dbReference>
<dbReference type="InterPro" id="IPR012340">
    <property type="entry name" value="NA-bd_OB-fold"/>
</dbReference>
<dbReference type="InterPro" id="IPR012162">
    <property type="entry name" value="PNPase"/>
</dbReference>
<dbReference type="InterPro" id="IPR027408">
    <property type="entry name" value="PNPase/RNase_PH_dom_sf"/>
</dbReference>
<dbReference type="InterPro" id="IPR015848">
    <property type="entry name" value="PNPase_PH_RNA-bd_bac/org-type"/>
</dbReference>
<dbReference type="InterPro" id="IPR020568">
    <property type="entry name" value="Ribosomal_Su5_D2-typ_SF"/>
</dbReference>
<dbReference type="InterPro" id="IPR003029">
    <property type="entry name" value="S1_domain"/>
</dbReference>
<dbReference type="NCBIfam" id="TIGR03591">
    <property type="entry name" value="polynuc_phos"/>
    <property type="match status" value="1"/>
</dbReference>
<dbReference type="NCBIfam" id="NF008805">
    <property type="entry name" value="PRK11824.1"/>
    <property type="match status" value="1"/>
</dbReference>
<dbReference type="PANTHER" id="PTHR11252">
    <property type="entry name" value="POLYRIBONUCLEOTIDE NUCLEOTIDYLTRANSFERASE"/>
    <property type="match status" value="1"/>
</dbReference>
<dbReference type="PANTHER" id="PTHR11252:SF0">
    <property type="entry name" value="POLYRIBONUCLEOTIDE NUCLEOTIDYLTRANSFERASE 1, MITOCHONDRIAL"/>
    <property type="match status" value="1"/>
</dbReference>
<dbReference type="Pfam" id="PF00013">
    <property type="entry name" value="KH_1"/>
    <property type="match status" value="1"/>
</dbReference>
<dbReference type="Pfam" id="PF03726">
    <property type="entry name" value="PNPase"/>
    <property type="match status" value="1"/>
</dbReference>
<dbReference type="Pfam" id="PF01138">
    <property type="entry name" value="RNase_PH"/>
    <property type="match status" value="2"/>
</dbReference>
<dbReference type="Pfam" id="PF03725">
    <property type="entry name" value="RNase_PH_C"/>
    <property type="match status" value="2"/>
</dbReference>
<dbReference type="Pfam" id="PF00575">
    <property type="entry name" value="S1"/>
    <property type="match status" value="1"/>
</dbReference>
<dbReference type="PIRSF" id="PIRSF005499">
    <property type="entry name" value="PNPase"/>
    <property type="match status" value="1"/>
</dbReference>
<dbReference type="SMART" id="SM00322">
    <property type="entry name" value="KH"/>
    <property type="match status" value="1"/>
</dbReference>
<dbReference type="SMART" id="SM00316">
    <property type="entry name" value="S1"/>
    <property type="match status" value="1"/>
</dbReference>
<dbReference type="SUPFAM" id="SSF54791">
    <property type="entry name" value="Eukaryotic type KH-domain (KH-domain type I)"/>
    <property type="match status" value="1"/>
</dbReference>
<dbReference type="SUPFAM" id="SSF50249">
    <property type="entry name" value="Nucleic acid-binding proteins"/>
    <property type="match status" value="1"/>
</dbReference>
<dbReference type="SUPFAM" id="SSF55666">
    <property type="entry name" value="Ribonuclease PH domain 2-like"/>
    <property type="match status" value="2"/>
</dbReference>
<dbReference type="SUPFAM" id="SSF54211">
    <property type="entry name" value="Ribosomal protein S5 domain 2-like"/>
    <property type="match status" value="2"/>
</dbReference>
<dbReference type="PROSITE" id="PS50084">
    <property type="entry name" value="KH_TYPE_1"/>
    <property type="match status" value="1"/>
</dbReference>
<dbReference type="PROSITE" id="PS50126">
    <property type="entry name" value="S1"/>
    <property type="match status" value="1"/>
</dbReference>
<comment type="function">
    <text evidence="1">Involved in mRNA degradation. Catalyzes the phosphorolysis of single-stranded polyribonucleotides processively in the 3'- to 5'-direction.</text>
</comment>
<comment type="catalytic activity">
    <reaction evidence="1">
        <text>RNA(n+1) + phosphate = RNA(n) + a ribonucleoside 5'-diphosphate</text>
        <dbReference type="Rhea" id="RHEA:22096"/>
        <dbReference type="Rhea" id="RHEA-COMP:14527"/>
        <dbReference type="Rhea" id="RHEA-COMP:17342"/>
        <dbReference type="ChEBI" id="CHEBI:43474"/>
        <dbReference type="ChEBI" id="CHEBI:57930"/>
        <dbReference type="ChEBI" id="CHEBI:140395"/>
        <dbReference type="EC" id="2.7.7.8"/>
    </reaction>
</comment>
<comment type="cofactor">
    <cofactor evidence="1">
        <name>Mg(2+)</name>
        <dbReference type="ChEBI" id="CHEBI:18420"/>
    </cofactor>
</comment>
<comment type="subunit">
    <text evidence="1">Component of the RNA degradosome, which is a multiprotein complex involved in RNA processing and mRNA degradation.</text>
</comment>
<comment type="subcellular location">
    <subcellularLocation>
        <location evidence="1">Cytoplasm</location>
    </subcellularLocation>
</comment>
<comment type="similarity">
    <text evidence="1">Belongs to the polyribonucleotide nucleotidyltransferase family.</text>
</comment>
<protein>
    <recommendedName>
        <fullName evidence="1">Polyribonucleotide nucleotidyltransferase</fullName>
        <ecNumber evidence="1">2.7.7.8</ecNumber>
    </recommendedName>
    <alternativeName>
        <fullName evidence="1">Polynucleotide phosphorylase</fullName>
        <shortName evidence="1">PNPase</shortName>
    </alternativeName>
</protein>